<evidence type="ECO:0000255" key="1">
    <source>
        <dbReference type="HAMAP-Rule" id="MF_00795"/>
    </source>
</evidence>
<comment type="subunit">
    <text evidence="1">Homodimer.</text>
</comment>
<comment type="subcellular location">
    <subcellularLocation>
        <location evidence="1">Cytoplasm</location>
    </subcellularLocation>
</comment>
<comment type="similarity">
    <text evidence="1">Belongs to the CutC family.</text>
</comment>
<comment type="caution">
    <text evidence="1">Once thought to be involved in copper homeostasis, experiments in E.coli have shown this is not the case.</text>
</comment>
<sequence>MALLEICCYSMECALTAQQNGADRVELCAAPKEGGLTPSLGVLKSVRQRVTIPVHPIIRPRGGDFCYSDGEFAAILEDVRTVRELGFPGLVTGVLDVDGNVDMSRMEKIMAAAGPLAVTFHRAFDMCANPLNTLNNLAELGITRVLTSGQKSDALQGLSKIMELIAHRDAPIIMAGAGVRAENLHHFLAAGVLEVHSSAGAWQASPMRYRNQGLSMSSDAHADEYSRYVVDGAAVAEMKGIIERHQAK</sequence>
<keyword id="KW-0963">Cytoplasm</keyword>
<keyword id="KW-1185">Reference proteome</keyword>
<organism>
    <name type="scientific">Shigella dysenteriae serotype 1 (strain Sd197)</name>
    <dbReference type="NCBI Taxonomy" id="300267"/>
    <lineage>
        <taxon>Bacteria</taxon>
        <taxon>Pseudomonadati</taxon>
        <taxon>Pseudomonadota</taxon>
        <taxon>Gammaproteobacteria</taxon>
        <taxon>Enterobacterales</taxon>
        <taxon>Enterobacteriaceae</taxon>
        <taxon>Shigella</taxon>
    </lineage>
</organism>
<accession>Q32H71</accession>
<proteinExistence type="inferred from homology"/>
<feature type="chain" id="PRO_1000046941" description="PF03932 family protein CutC">
    <location>
        <begin position="1"/>
        <end position="248"/>
    </location>
</feature>
<gene>
    <name evidence="1" type="primary">cutC</name>
    <name type="ordered locus">SDY_1178</name>
</gene>
<dbReference type="EMBL" id="CP000034">
    <property type="protein sequence ID" value="ABB61334.1"/>
    <property type="molecule type" value="Genomic_DNA"/>
</dbReference>
<dbReference type="RefSeq" id="WP_001185749.1">
    <property type="nucleotide sequence ID" value="NC_007606.1"/>
</dbReference>
<dbReference type="RefSeq" id="YP_402825.1">
    <property type="nucleotide sequence ID" value="NC_007606.1"/>
</dbReference>
<dbReference type="SMR" id="Q32H71"/>
<dbReference type="STRING" id="300267.SDY_1178"/>
<dbReference type="EnsemblBacteria" id="ABB61334">
    <property type="protein sequence ID" value="ABB61334"/>
    <property type="gene ID" value="SDY_1178"/>
</dbReference>
<dbReference type="KEGG" id="sdy:SDY_1178"/>
<dbReference type="PATRIC" id="fig|300267.13.peg.1392"/>
<dbReference type="HOGENOM" id="CLU_050555_3_1_6"/>
<dbReference type="Proteomes" id="UP000002716">
    <property type="component" value="Chromosome"/>
</dbReference>
<dbReference type="GO" id="GO:0005737">
    <property type="term" value="C:cytoplasm"/>
    <property type="evidence" value="ECO:0007669"/>
    <property type="project" value="UniProtKB-SubCell"/>
</dbReference>
<dbReference type="GO" id="GO:0005507">
    <property type="term" value="F:copper ion binding"/>
    <property type="evidence" value="ECO:0007669"/>
    <property type="project" value="TreeGrafter"/>
</dbReference>
<dbReference type="FunFam" id="3.20.20.380:FF:000001">
    <property type="entry name" value="Copper homeostasis protein CutC"/>
    <property type="match status" value="1"/>
</dbReference>
<dbReference type="Gene3D" id="3.20.20.380">
    <property type="entry name" value="Copper homeostasis (CutC) domain"/>
    <property type="match status" value="1"/>
</dbReference>
<dbReference type="HAMAP" id="MF_00795">
    <property type="entry name" value="CutC"/>
    <property type="match status" value="1"/>
</dbReference>
<dbReference type="InterPro" id="IPR005627">
    <property type="entry name" value="CutC-like"/>
</dbReference>
<dbReference type="InterPro" id="IPR036822">
    <property type="entry name" value="CutC-like_dom_sf"/>
</dbReference>
<dbReference type="NCBIfam" id="NF008603">
    <property type="entry name" value="PRK11572.1"/>
    <property type="match status" value="1"/>
</dbReference>
<dbReference type="PANTHER" id="PTHR12598">
    <property type="entry name" value="COPPER HOMEOSTASIS PROTEIN CUTC"/>
    <property type="match status" value="1"/>
</dbReference>
<dbReference type="PANTHER" id="PTHR12598:SF0">
    <property type="entry name" value="COPPER HOMEOSTASIS PROTEIN CUTC HOMOLOG"/>
    <property type="match status" value="1"/>
</dbReference>
<dbReference type="Pfam" id="PF03932">
    <property type="entry name" value="CutC"/>
    <property type="match status" value="1"/>
</dbReference>
<dbReference type="SUPFAM" id="SSF110395">
    <property type="entry name" value="CutC-like"/>
    <property type="match status" value="1"/>
</dbReference>
<protein>
    <recommendedName>
        <fullName evidence="1">PF03932 family protein CutC</fullName>
    </recommendedName>
</protein>
<name>CUTC_SHIDS</name>
<reference key="1">
    <citation type="journal article" date="2005" name="Nucleic Acids Res.">
        <title>Genome dynamics and diversity of Shigella species, the etiologic agents of bacillary dysentery.</title>
        <authorList>
            <person name="Yang F."/>
            <person name="Yang J."/>
            <person name="Zhang X."/>
            <person name="Chen L."/>
            <person name="Jiang Y."/>
            <person name="Yan Y."/>
            <person name="Tang X."/>
            <person name="Wang J."/>
            <person name="Xiong Z."/>
            <person name="Dong J."/>
            <person name="Xue Y."/>
            <person name="Zhu Y."/>
            <person name="Xu X."/>
            <person name="Sun L."/>
            <person name="Chen S."/>
            <person name="Nie H."/>
            <person name="Peng J."/>
            <person name="Xu J."/>
            <person name="Wang Y."/>
            <person name="Yuan Z."/>
            <person name="Wen Y."/>
            <person name="Yao Z."/>
            <person name="Shen Y."/>
            <person name="Qiang B."/>
            <person name="Hou Y."/>
            <person name="Yu J."/>
            <person name="Jin Q."/>
        </authorList>
    </citation>
    <scope>NUCLEOTIDE SEQUENCE [LARGE SCALE GENOMIC DNA]</scope>
    <source>
        <strain>Sd197</strain>
    </source>
</reference>